<keyword id="KW-0067">ATP-binding</keyword>
<keyword id="KW-0418">Kinase</keyword>
<keyword id="KW-0460">Magnesium</keyword>
<keyword id="KW-0547">Nucleotide-binding</keyword>
<keyword id="KW-0808">Transferase</keyword>
<comment type="function">
    <text evidence="1">Pyridoxal kinase involved in the salvage pathway of pyridoxal 5'-phosphate (PLP). Catalyzes the phosphorylation of pyridoxal to PLP.</text>
</comment>
<comment type="catalytic activity">
    <reaction evidence="1">
        <text>pyridoxal + ATP = pyridoxal 5'-phosphate + ADP + H(+)</text>
        <dbReference type="Rhea" id="RHEA:10224"/>
        <dbReference type="ChEBI" id="CHEBI:15378"/>
        <dbReference type="ChEBI" id="CHEBI:17310"/>
        <dbReference type="ChEBI" id="CHEBI:30616"/>
        <dbReference type="ChEBI" id="CHEBI:456216"/>
        <dbReference type="ChEBI" id="CHEBI:597326"/>
        <dbReference type="EC" id="2.7.1.35"/>
    </reaction>
</comment>
<comment type="cofactor">
    <cofactor evidence="1">
        <name>Mg(2+)</name>
        <dbReference type="ChEBI" id="CHEBI:18420"/>
    </cofactor>
</comment>
<comment type="pathway">
    <text evidence="1">Cofactor metabolism; pyridoxal 5'-phosphate salvage; pyridoxal 5'-phosphate from pyridoxal: step 1/1.</text>
</comment>
<comment type="subunit">
    <text evidence="1">Homodimer.</text>
</comment>
<comment type="similarity">
    <text evidence="1">Belongs to the pyridoxine kinase family. PdxY subfamily.</text>
</comment>
<sequence>MKNILAIQSHVVFGHAGNSAAEFPMRRLGANVWPLNTVQFSNHTQYGKWTGCVMPPSHLTEIVQGIADIGQLAHCDAVLSGYLGSAEQGEHILGIVRQVKAANPQAKYFCDPVMGHPEKGCIVAPGVAEFHVRYALPASDIIAPNLIELEILSKHSVNNVDDAVQAARELIAQGPEIVLVKHLARAGYSSERFEMLLVTAQEAWHISRPLVDFGSRQPVGVGDVTSGLLLVKLLQGATLQQALEHVTAAVYEIMIATKTMQEYELQVVAAQDRIANPEHYFSATRL</sequence>
<feature type="chain" id="PRO_0000269826" description="Pyridoxal kinase PdxY">
    <location>
        <begin position="1"/>
        <end position="286"/>
    </location>
</feature>
<feature type="binding site" evidence="1">
    <location>
        <position position="9"/>
    </location>
    <ligand>
        <name>substrate</name>
    </ligand>
</feature>
<feature type="binding site" evidence="1">
    <location>
        <begin position="44"/>
        <end position="45"/>
    </location>
    <ligand>
        <name>substrate</name>
    </ligand>
</feature>
<feature type="binding site" evidence="1">
    <location>
        <position position="111"/>
    </location>
    <ligand>
        <name>ATP</name>
        <dbReference type="ChEBI" id="CHEBI:30616"/>
    </ligand>
</feature>
<feature type="binding site" evidence="1">
    <location>
        <position position="143"/>
    </location>
    <ligand>
        <name>ATP</name>
        <dbReference type="ChEBI" id="CHEBI:30616"/>
    </ligand>
</feature>
<feature type="binding site" evidence="1">
    <location>
        <position position="148"/>
    </location>
    <ligand>
        <name>ATP</name>
        <dbReference type="ChEBI" id="CHEBI:30616"/>
    </ligand>
</feature>
<feature type="binding site" evidence="1">
    <location>
        <position position="181"/>
    </location>
    <ligand>
        <name>ATP</name>
        <dbReference type="ChEBI" id="CHEBI:30616"/>
    </ligand>
</feature>
<feature type="binding site" evidence="1">
    <location>
        <begin position="208"/>
        <end position="211"/>
    </location>
    <ligand>
        <name>ATP</name>
        <dbReference type="ChEBI" id="CHEBI:30616"/>
    </ligand>
</feature>
<feature type="binding site" evidence="1">
    <location>
        <position position="223"/>
    </location>
    <ligand>
        <name>substrate</name>
    </ligand>
</feature>
<proteinExistence type="inferred from homology"/>
<organism>
    <name type="scientific">Salmonella choleraesuis (strain SC-B67)</name>
    <dbReference type="NCBI Taxonomy" id="321314"/>
    <lineage>
        <taxon>Bacteria</taxon>
        <taxon>Pseudomonadati</taxon>
        <taxon>Pseudomonadota</taxon>
        <taxon>Gammaproteobacteria</taxon>
        <taxon>Enterobacterales</taxon>
        <taxon>Enterobacteriaceae</taxon>
        <taxon>Salmonella</taxon>
    </lineage>
</organism>
<name>PDXY_SALCH</name>
<protein>
    <recommendedName>
        <fullName evidence="1">Pyridoxal kinase PdxY</fullName>
        <shortName evidence="1">PL kinase</shortName>
        <ecNumber evidence="1">2.7.1.35</ecNumber>
    </recommendedName>
</protein>
<dbReference type="EC" id="2.7.1.35" evidence="1"/>
<dbReference type="EMBL" id="AE017220">
    <property type="protein sequence ID" value="AAX65374.1"/>
    <property type="molecule type" value="Genomic_DNA"/>
</dbReference>
<dbReference type="RefSeq" id="WP_000789732.1">
    <property type="nucleotide sequence ID" value="NC_006905.1"/>
</dbReference>
<dbReference type="SMR" id="Q57PI7"/>
<dbReference type="KEGG" id="sec:SCH_1468"/>
<dbReference type="HOGENOM" id="CLU_046496_3_0_6"/>
<dbReference type="UniPathway" id="UPA01068">
    <property type="reaction ID" value="UER00298"/>
</dbReference>
<dbReference type="Proteomes" id="UP000000538">
    <property type="component" value="Chromosome"/>
</dbReference>
<dbReference type="GO" id="GO:0005829">
    <property type="term" value="C:cytosol"/>
    <property type="evidence" value="ECO:0007669"/>
    <property type="project" value="TreeGrafter"/>
</dbReference>
<dbReference type="GO" id="GO:0005524">
    <property type="term" value="F:ATP binding"/>
    <property type="evidence" value="ECO:0007669"/>
    <property type="project" value="UniProtKB-UniRule"/>
</dbReference>
<dbReference type="GO" id="GO:0000287">
    <property type="term" value="F:magnesium ion binding"/>
    <property type="evidence" value="ECO:0007669"/>
    <property type="project" value="UniProtKB-UniRule"/>
</dbReference>
<dbReference type="GO" id="GO:0008478">
    <property type="term" value="F:pyridoxal kinase activity"/>
    <property type="evidence" value="ECO:0007669"/>
    <property type="project" value="UniProtKB-UniRule"/>
</dbReference>
<dbReference type="GO" id="GO:0009443">
    <property type="term" value="P:pyridoxal 5'-phosphate salvage"/>
    <property type="evidence" value="ECO:0007669"/>
    <property type="project" value="UniProtKB-UniRule"/>
</dbReference>
<dbReference type="CDD" id="cd01173">
    <property type="entry name" value="pyridoxal_pyridoxamine_kinase"/>
    <property type="match status" value="1"/>
</dbReference>
<dbReference type="FunFam" id="3.40.1190.20:FF:000008">
    <property type="entry name" value="Pyridoxal kinase PdxY"/>
    <property type="match status" value="1"/>
</dbReference>
<dbReference type="Gene3D" id="3.40.1190.20">
    <property type="match status" value="1"/>
</dbReference>
<dbReference type="HAMAP" id="MF_01639">
    <property type="entry name" value="PdxY"/>
    <property type="match status" value="1"/>
</dbReference>
<dbReference type="InterPro" id="IPR013749">
    <property type="entry name" value="PM/HMP-P_kinase-1"/>
</dbReference>
<dbReference type="InterPro" id="IPR004625">
    <property type="entry name" value="PyrdxlKinase"/>
</dbReference>
<dbReference type="InterPro" id="IPR023685">
    <property type="entry name" value="Pyridoxal_kinase_PdxY"/>
</dbReference>
<dbReference type="InterPro" id="IPR029056">
    <property type="entry name" value="Ribokinase-like"/>
</dbReference>
<dbReference type="NCBIfam" id="NF004398">
    <property type="entry name" value="PRK05756.1"/>
    <property type="match status" value="1"/>
</dbReference>
<dbReference type="NCBIfam" id="TIGR00687">
    <property type="entry name" value="pyridox_kin"/>
    <property type="match status" value="1"/>
</dbReference>
<dbReference type="PANTHER" id="PTHR10534">
    <property type="entry name" value="PYRIDOXAL KINASE"/>
    <property type="match status" value="1"/>
</dbReference>
<dbReference type="PANTHER" id="PTHR10534:SF2">
    <property type="entry name" value="PYRIDOXAL KINASE"/>
    <property type="match status" value="1"/>
</dbReference>
<dbReference type="Pfam" id="PF08543">
    <property type="entry name" value="Phos_pyr_kin"/>
    <property type="match status" value="1"/>
</dbReference>
<dbReference type="SUPFAM" id="SSF53613">
    <property type="entry name" value="Ribokinase-like"/>
    <property type="match status" value="1"/>
</dbReference>
<gene>
    <name evidence="1" type="primary">pdxY</name>
    <name type="ordered locus">SCH_1468</name>
</gene>
<evidence type="ECO:0000255" key="1">
    <source>
        <dbReference type="HAMAP-Rule" id="MF_01639"/>
    </source>
</evidence>
<reference key="1">
    <citation type="journal article" date="2005" name="Nucleic Acids Res.">
        <title>The genome sequence of Salmonella enterica serovar Choleraesuis, a highly invasive and resistant zoonotic pathogen.</title>
        <authorList>
            <person name="Chiu C.-H."/>
            <person name="Tang P."/>
            <person name="Chu C."/>
            <person name="Hu S."/>
            <person name="Bao Q."/>
            <person name="Yu J."/>
            <person name="Chou Y.-Y."/>
            <person name="Wang H.-S."/>
            <person name="Lee Y.-S."/>
        </authorList>
    </citation>
    <scope>NUCLEOTIDE SEQUENCE [LARGE SCALE GENOMIC DNA]</scope>
    <source>
        <strain>SC-B67</strain>
    </source>
</reference>
<accession>Q57PI7</accession>